<proteinExistence type="inferred from homology"/>
<reference key="1">
    <citation type="journal article" date="2005" name="Proc. Natl. Acad. Sci. U.S.A.">
        <title>The psychrophilic lifestyle as revealed by the genome sequence of Colwellia psychrerythraea 34H through genomic and proteomic analyses.</title>
        <authorList>
            <person name="Methe B.A."/>
            <person name="Nelson K.E."/>
            <person name="Deming J.W."/>
            <person name="Momen B."/>
            <person name="Melamud E."/>
            <person name="Zhang X."/>
            <person name="Moult J."/>
            <person name="Madupu R."/>
            <person name="Nelson W.C."/>
            <person name="Dodson R.J."/>
            <person name="Brinkac L.M."/>
            <person name="Daugherty S.C."/>
            <person name="Durkin A.S."/>
            <person name="DeBoy R.T."/>
            <person name="Kolonay J.F."/>
            <person name="Sullivan S.A."/>
            <person name="Zhou L."/>
            <person name="Davidsen T.M."/>
            <person name="Wu M."/>
            <person name="Huston A.L."/>
            <person name="Lewis M."/>
            <person name="Weaver B."/>
            <person name="Weidman J.F."/>
            <person name="Khouri H."/>
            <person name="Utterback T.R."/>
            <person name="Feldblyum T.V."/>
            <person name="Fraser C.M."/>
        </authorList>
    </citation>
    <scope>NUCLEOTIDE SEQUENCE [LARGE SCALE GENOMIC DNA]</scope>
    <source>
        <strain>34H / ATCC BAA-681</strain>
    </source>
</reference>
<dbReference type="EMBL" id="CP000083">
    <property type="protein sequence ID" value="AAZ25820.1"/>
    <property type="molecule type" value="Genomic_DNA"/>
</dbReference>
<dbReference type="RefSeq" id="WP_011045203.1">
    <property type="nucleotide sequence ID" value="NC_003910.7"/>
</dbReference>
<dbReference type="SMR" id="Q47VQ0"/>
<dbReference type="STRING" id="167879.CPS_4474"/>
<dbReference type="KEGG" id="cps:CPS_4474"/>
<dbReference type="eggNOG" id="COG2001">
    <property type="taxonomic scope" value="Bacteria"/>
</dbReference>
<dbReference type="HOGENOM" id="CLU_107907_2_0_6"/>
<dbReference type="Proteomes" id="UP000000547">
    <property type="component" value="Chromosome"/>
</dbReference>
<dbReference type="GO" id="GO:0005737">
    <property type="term" value="C:cytoplasm"/>
    <property type="evidence" value="ECO:0007669"/>
    <property type="project" value="UniProtKB-UniRule"/>
</dbReference>
<dbReference type="GO" id="GO:0009295">
    <property type="term" value="C:nucleoid"/>
    <property type="evidence" value="ECO:0007669"/>
    <property type="project" value="UniProtKB-SubCell"/>
</dbReference>
<dbReference type="GO" id="GO:0003700">
    <property type="term" value="F:DNA-binding transcription factor activity"/>
    <property type="evidence" value="ECO:0007669"/>
    <property type="project" value="UniProtKB-UniRule"/>
</dbReference>
<dbReference type="GO" id="GO:0000976">
    <property type="term" value="F:transcription cis-regulatory region binding"/>
    <property type="evidence" value="ECO:0007669"/>
    <property type="project" value="TreeGrafter"/>
</dbReference>
<dbReference type="GO" id="GO:2000143">
    <property type="term" value="P:negative regulation of DNA-templated transcription initiation"/>
    <property type="evidence" value="ECO:0007669"/>
    <property type="project" value="TreeGrafter"/>
</dbReference>
<dbReference type="CDD" id="cd16321">
    <property type="entry name" value="MraZ_C"/>
    <property type="match status" value="1"/>
</dbReference>
<dbReference type="CDD" id="cd16320">
    <property type="entry name" value="MraZ_N"/>
    <property type="match status" value="1"/>
</dbReference>
<dbReference type="Gene3D" id="3.40.1550.20">
    <property type="entry name" value="Transcriptional regulator MraZ domain"/>
    <property type="match status" value="1"/>
</dbReference>
<dbReference type="HAMAP" id="MF_01008">
    <property type="entry name" value="MraZ"/>
    <property type="match status" value="1"/>
</dbReference>
<dbReference type="InterPro" id="IPR003444">
    <property type="entry name" value="MraZ"/>
</dbReference>
<dbReference type="InterPro" id="IPR035644">
    <property type="entry name" value="MraZ_C"/>
</dbReference>
<dbReference type="InterPro" id="IPR020603">
    <property type="entry name" value="MraZ_dom"/>
</dbReference>
<dbReference type="InterPro" id="IPR035642">
    <property type="entry name" value="MraZ_N"/>
</dbReference>
<dbReference type="InterPro" id="IPR038619">
    <property type="entry name" value="MraZ_sf"/>
</dbReference>
<dbReference type="InterPro" id="IPR007159">
    <property type="entry name" value="SpoVT-AbrB_dom"/>
</dbReference>
<dbReference type="InterPro" id="IPR037914">
    <property type="entry name" value="SpoVT-AbrB_sf"/>
</dbReference>
<dbReference type="NCBIfam" id="TIGR00242">
    <property type="entry name" value="division/cell wall cluster transcriptional repressor MraZ"/>
    <property type="match status" value="1"/>
</dbReference>
<dbReference type="PANTHER" id="PTHR34701">
    <property type="entry name" value="TRANSCRIPTIONAL REGULATOR MRAZ"/>
    <property type="match status" value="1"/>
</dbReference>
<dbReference type="PANTHER" id="PTHR34701:SF1">
    <property type="entry name" value="TRANSCRIPTIONAL REGULATOR MRAZ"/>
    <property type="match status" value="1"/>
</dbReference>
<dbReference type="Pfam" id="PF02381">
    <property type="entry name" value="MraZ"/>
    <property type="match status" value="2"/>
</dbReference>
<dbReference type="SUPFAM" id="SSF89447">
    <property type="entry name" value="AbrB/MazE/MraZ-like"/>
    <property type="match status" value="1"/>
</dbReference>
<dbReference type="PROSITE" id="PS51740">
    <property type="entry name" value="SPOVT_ABRB"/>
    <property type="match status" value="2"/>
</dbReference>
<gene>
    <name evidence="1" type="primary">mraZ</name>
    <name type="ordered locus">CPS_4474</name>
</gene>
<sequence>MFRGTSAITLDSKNRITIPTKYREELFADCQGKMVCTVDIQHPCLLLYPLPEWEEIELKLCNLSSMNPQERLLQQVILGNASDCEMDKNGRLLINGPLRQHASLEKNVMLVGQLKKFEIWHDTAWQSQMLQGISKIQSGEIELTERLLDLSL</sequence>
<name>MRAZ_COLP3</name>
<organism>
    <name type="scientific">Colwellia psychrerythraea (strain 34H / ATCC BAA-681)</name>
    <name type="common">Vibrio psychroerythus</name>
    <dbReference type="NCBI Taxonomy" id="167879"/>
    <lineage>
        <taxon>Bacteria</taxon>
        <taxon>Pseudomonadati</taxon>
        <taxon>Pseudomonadota</taxon>
        <taxon>Gammaproteobacteria</taxon>
        <taxon>Alteromonadales</taxon>
        <taxon>Colwelliaceae</taxon>
        <taxon>Colwellia</taxon>
    </lineage>
</organism>
<comment type="subunit">
    <text evidence="1">Forms oligomers.</text>
</comment>
<comment type="subcellular location">
    <subcellularLocation>
        <location evidence="1">Cytoplasm</location>
        <location evidence="1">Nucleoid</location>
    </subcellularLocation>
</comment>
<comment type="similarity">
    <text evidence="1">Belongs to the MraZ family.</text>
</comment>
<accession>Q47VQ0</accession>
<feature type="chain" id="PRO_0000230081" description="Transcriptional regulator MraZ">
    <location>
        <begin position="1"/>
        <end position="152"/>
    </location>
</feature>
<feature type="domain" description="SpoVT-AbrB 1" evidence="2">
    <location>
        <begin position="5"/>
        <end position="52"/>
    </location>
</feature>
<feature type="domain" description="SpoVT-AbrB 2" evidence="2">
    <location>
        <begin position="81"/>
        <end position="124"/>
    </location>
</feature>
<evidence type="ECO:0000255" key="1">
    <source>
        <dbReference type="HAMAP-Rule" id="MF_01008"/>
    </source>
</evidence>
<evidence type="ECO:0000255" key="2">
    <source>
        <dbReference type="PROSITE-ProRule" id="PRU01076"/>
    </source>
</evidence>
<protein>
    <recommendedName>
        <fullName>Transcriptional regulator MraZ</fullName>
    </recommendedName>
</protein>
<keyword id="KW-0963">Cytoplasm</keyword>
<keyword id="KW-0238">DNA-binding</keyword>
<keyword id="KW-0677">Repeat</keyword>
<keyword id="KW-0804">Transcription</keyword>
<keyword id="KW-0805">Transcription regulation</keyword>